<proteinExistence type="inferred from homology"/>
<organism>
    <name type="scientific">Roseobacter denitrificans (strain ATCC 33942 / OCh 114)</name>
    <name type="common">Erythrobacter sp. (strain OCh 114)</name>
    <name type="synonym">Roseobacter denitrificans</name>
    <dbReference type="NCBI Taxonomy" id="375451"/>
    <lineage>
        <taxon>Bacteria</taxon>
        <taxon>Pseudomonadati</taxon>
        <taxon>Pseudomonadota</taxon>
        <taxon>Alphaproteobacteria</taxon>
        <taxon>Rhodobacterales</taxon>
        <taxon>Roseobacteraceae</taxon>
        <taxon>Roseobacter</taxon>
    </lineage>
</organism>
<evidence type="ECO:0000255" key="1">
    <source>
        <dbReference type="HAMAP-Rule" id="MF_01716"/>
    </source>
</evidence>
<sequence length="511" mass="54817">MSKHTLSADVPVVSMDAITKTFPGVKALDQVRLDLYPGQVTALVGENGAGKSTTVKILTGIYQPDGGTIRIAGAPVILNTPNDASAAGITAIHQETVLFDELTVAENIFIGHAPRTKWGLIDKAAMHRKARGLLDEIGAPFDTGAYLRELGIANKHLVAIARALSVDARVVIMDEPTAALSHKEIEELYELVETLKAQGKAILFISHKFDEIFRIADRYTVFRDGAFVSDGLISDIDQDALVKMMVGRAVDHIFPERQAALGEEVLQVAGYAHPTEFAGIGFTLKRGEILGFYGLVGAGRSELMQALFGITRPSKGVTKINGDIRVIRSPADAVNNGIVYVPEDRGKQGVVIGLPIFQNITLPSLGRTSQSGFLRMAEEFKLARDYAERLDLRAAALDQDVGNLSGGNQQKVVIAKWLATQPQVIILDEPTKGIDIGSKAAVHEFMAELAGQGLAVIMVSSEIPEVIGMSDRVIVMREGRIAAEVQGEDLTPETLVRHAAGIAPAPESIPA</sequence>
<comment type="function">
    <text evidence="1">Part of the ABC transporter complex RbsABC involved in ribose import. Responsible for energy coupling to the transport system.</text>
</comment>
<comment type="catalytic activity">
    <reaction evidence="1">
        <text>D-ribose(out) + ATP + H2O = D-ribose(in) + ADP + phosphate + H(+)</text>
        <dbReference type="Rhea" id="RHEA:29903"/>
        <dbReference type="ChEBI" id="CHEBI:15377"/>
        <dbReference type="ChEBI" id="CHEBI:15378"/>
        <dbReference type="ChEBI" id="CHEBI:30616"/>
        <dbReference type="ChEBI" id="CHEBI:43474"/>
        <dbReference type="ChEBI" id="CHEBI:47013"/>
        <dbReference type="ChEBI" id="CHEBI:456216"/>
        <dbReference type="EC" id="7.5.2.7"/>
    </reaction>
</comment>
<comment type="subunit">
    <text evidence="1">The complex is composed of an ATP-binding protein (RbsA), two transmembrane proteins (RbsC) and a solute-binding protein (RbsB).</text>
</comment>
<comment type="subcellular location">
    <subcellularLocation>
        <location evidence="1">Cell inner membrane</location>
        <topology evidence="1">Peripheral membrane protein</topology>
    </subcellularLocation>
</comment>
<comment type="similarity">
    <text evidence="1">Belongs to the ABC transporter superfamily. Ribose importer (TC 3.A.1.2.1) family.</text>
</comment>
<protein>
    <recommendedName>
        <fullName evidence="1">Ribose import ATP-binding protein RbsA</fullName>
        <ecNumber evidence="1">7.5.2.7</ecNumber>
    </recommendedName>
</protein>
<name>RBSA_ROSDO</name>
<feature type="chain" id="PRO_0000261094" description="Ribose import ATP-binding protein RbsA">
    <location>
        <begin position="1"/>
        <end position="511"/>
    </location>
</feature>
<feature type="domain" description="ABC transporter 1" evidence="1">
    <location>
        <begin position="13"/>
        <end position="249"/>
    </location>
</feature>
<feature type="domain" description="ABC transporter 2" evidence="1">
    <location>
        <begin position="260"/>
        <end position="503"/>
    </location>
</feature>
<feature type="binding site" evidence="1">
    <location>
        <begin position="45"/>
        <end position="52"/>
    </location>
    <ligand>
        <name>ATP</name>
        <dbReference type="ChEBI" id="CHEBI:30616"/>
    </ligand>
</feature>
<dbReference type="EC" id="7.5.2.7" evidence="1"/>
<dbReference type="EMBL" id="CP000362">
    <property type="protein sequence ID" value="ABG32590.1"/>
    <property type="molecule type" value="Genomic_DNA"/>
</dbReference>
<dbReference type="RefSeq" id="WP_011569206.1">
    <property type="nucleotide sequence ID" value="NC_008209.1"/>
</dbReference>
<dbReference type="SMR" id="Q164K3"/>
<dbReference type="STRING" id="375451.RD1_3079"/>
<dbReference type="KEGG" id="rde:RD1_3079"/>
<dbReference type="eggNOG" id="COG1129">
    <property type="taxonomic scope" value="Bacteria"/>
</dbReference>
<dbReference type="HOGENOM" id="CLU_000604_92_3_5"/>
<dbReference type="OrthoDB" id="9805029at2"/>
<dbReference type="Proteomes" id="UP000007029">
    <property type="component" value="Chromosome"/>
</dbReference>
<dbReference type="GO" id="GO:0005886">
    <property type="term" value="C:plasma membrane"/>
    <property type="evidence" value="ECO:0007669"/>
    <property type="project" value="UniProtKB-SubCell"/>
</dbReference>
<dbReference type="GO" id="GO:0015611">
    <property type="term" value="F:ABC-type D-ribose transporter activity"/>
    <property type="evidence" value="ECO:0007669"/>
    <property type="project" value="UniProtKB-EC"/>
</dbReference>
<dbReference type="GO" id="GO:0005524">
    <property type="term" value="F:ATP binding"/>
    <property type="evidence" value="ECO:0007669"/>
    <property type="project" value="UniProtKB-KW"/>
</dbReference>
<dbReference type="GO" id="GO:0016887">
    <property type="term" value="F:ATP hydrolysis activity"/>
    <property type="evidence" value="ECO:0007669"/>
    <property type="project" value="InterPro"/>
</dbReference>
<dbReference type="CDD" id="cd03216">
    <property type="entry name" value="ABC_Carb_Monos_I"/>
    <property type="match status" value="1"/>
</dbReference>
<dbReference type="CDD" id="cd03215">
    <property type="entry name" value="ABC_Carb_Monos_II"/>
    <property type="match status" value="1"/>
</dbReference>
<dbReference type="FunFam" id="3.40.50.300:FF:000127">
    <property type="entry name" value="Ribose import ATP-binding protein RbsA"/>
    <property type="match status" value="1"/>
</dbReference>
<dbReference type="Gene3D" id="3.40.50.300">
    <property type="entry name" value="P-loop containing nucleotide triphosphate hydrolases"/>
    <property type="match status" value="2"/>
</dbReference>
<dbReference type="InterPro" id="IPR003593">
    <property type="entry name" value="AAA+_ATPase"/>
</dbReference>
<dbReference type="InterPro" id="IPR050107">
    <property type="entry name" value="ABC_carbohydrate_import_ATPase"/>
</dbReference>
<dbReference type="InterPro" id="IPR003439">
    <property type="entry name" value="ABC_transporter-like_ATP-bd"/>
</dbReference>
<dbReference type="InterPro" id="IPR017871">
    <property type="entry name" value="ABC_transporter-like_CS"/>
</dbReference>
<dbReference type="InterPro" id="IPR027417">
    <property type="entry name" value="P-loop_NTPase"/>
</dbReference>
<dbReference type="PANTHER" id="PTHR43790">
    <property type="entry name" value="CARBOHYDRATE TRANSPORT ATP-BINDING PROTEIN MG119-RELATED"/>
    <property type="match status" value="1"/>
</dbReference>
<dbReference type="PANTHER" id="PTHR43790:SF3">
    <property type="entry name" value="D-ALLOSE IMPORT ATP-BINDING PROTEIN ALSA-RELATED"/>
    <property type="match status" value="1"/>
</dbReference>
<dbReference type="Pfam" id="PF00005">
    <property type="entry name" value="ABC_tran"/>
    <property type="match status" value="2"/>
</dbReference>
<dbReference type="SMART" id="SM00382">
    <property type="entry name" value="AAA"/>
    <property type="match status" value="2"/>
</dbReference>
<dbReference type="SUPFAM" id="SSF52540">
    <property type="entry name" value="P-loop containing nucleoside triphosphate hydrolases"/>
    <property type="match status" value="2"/>
</dbReference>
<dbReference type="PROSITE" id="PS00211">
    <property type="entry name" value="ABC_TRANSPORTER_1"/>
    <property type="match status" value="1"/>
</dbReference>
<dbReference type="PROSITE" id="PS50893">
    <property type="entry name" value="ABC_TRANSPORTER_2"/>
    <property type="match status" value="2"/>
</dbReference>
<dbReference type="PROSITE" id="PS51254">
    <property type="entry name" value="RBSA"/>
    <property type="match status" value="1"/>
</dbReference>
<gene>
    <name evidence="1" type="primary">rbsA</name>
    <name type="ordered locus">RD1_3079</name>
</gene>
<keyword id="KW-0067">ATP-binding</keyword>
<keyword id="KW-0997">Cell inner membrane</keyword>
<keyword id="KW-1003">Cell membrane</keyword>
<keyword id="KW-0472">Membrane</keyword>
<keyword id="KW-0547">Nucleotide-binding</keyword>
<keyword id="KW-1185">Reference proteome</keyword>
<keyword id="KW-0677">Repeat</keyword>
<keyword id="KW-0762">Sugar transport</keyword>
<keyword id="KW-1278">Translocase</keyword>
<keyword id="KW-0813">Transport</keyword>
<reference key="1">
    <citation type="journal article" date="2007" name="J. Bacteriol.">
        <title>The complete genome sequence of Roseobacter denitrificans reveals a mixotrophic rather than photosynthetic metabolism.</title>
        <authorList>
            <person name="Swingley W.D."/>
            <person name="Sadekar S."/>
            <person name="Mastrian S.D."/>
            <person name="Matthies H.J."/>
            <person name="Hao J."/>
            <person name="Ramos H."/>
            <person name="Acharya C.R."/>
            <person name="Conrad A.L."/>
            <person name="Taylor H.L."/>
            <person name="Dejesa L.C."/>
            <person name="Shah M.K."/>
            <person name="O'Huallachain M.E."/>
            <person name="Lince M.T."/>
            <person name="Blankenship R.E."/>
            <person name="Beatty J.T."/>
            <person name="Touchman J.W."/>
        </authorList>
    </citation>
    <scope>NUCLEOTIDE SEQUENCE [LARGE SCALE GENOMIC DNA]</scope>
    <source>
        <strain>ATCC 33942 / OCh 114</strain>
    </source>
</reference>
<accession>Q164K3</accession>